<feature type="initiator methionine" description="Removed" evidence="1">
    <location>
        <position position="1"/>
    </location>
</feature>
<feature type="chain" id="PRO_0000239442" description="Protein MIX23">
    <location>
        <begin position="2"/>
        <end position="144"/>
    </location>
</feature>
<feature type="coiled-coil region" evidence="2">
    <location>
        <begin position="82"/>
        <end position="120"/>
    </location>
</feature>
<feature type="modified residue" description="N-acetylalanine" evidence="1">
    <location>
        <position position="2"/>
    </location>
</feature>
<feature type="modified residue" description="N6-acetyllysine" evidence="1">
    <location>
        <position position="100"/>
    </location>
</feature>
<feature type="sequence conflict" description="In Ref. 1; BAE22538." evidence="3" ref="1">
    <original>S</original>
    <variation>C</variation>
    <location>
        <position position="42"/>
    </location>
</feature>
<reference key="1">
    <citation type="journal article" date="2005" name="Science">
        <title>The transcriptional landscape of the mammalian genome.</title>
        <authorList>
            <person name="Carninci P."/>
            <person name="Kasukawa T."/>
            <person name="Katayama S."/>
            <person name="Gough J."/>
            <person name="Frith M.C."/>
            <person name="Maeda N."/>
            <person name="Oyama R."/>
            <person name="Ravasi T."/>
            <person name="Lenhard B."/>
            <person name="Wells C."/>
            <person name="Kodzius R."/>
            <person name="Shimokawa K."/>
            <person name="Bajic V.B."/>
            <person name="Brenner S.E."/>
            <person name="Batalov S."/>
            <person name="Forrest A.R."/>
            <person name="Zavolan M."/>
            <person name="Davis M.J."/>
            <person name="Wilming L.G."/>
            <person name="Aidinis V."/>
            <person name="Allen J.E."/>
            <person name="Ambesi-Impiombato A."/>
            <person name="Apweiler R."/>
            <person name="Aturaliya R.N."/>
            <person name="Bailey T.L."/>
            <person name="Bansal M."/>
            <person name="Baxter L."/>
            <person name="Beisel K.W."/>
            <person name="Bersano T."/>
            <person name="Bono H."/>
            <person name="Chalk A.M."/>
            <person name="Chiu K.P."/>
            <person name="Choudhary V."/>
            <person name="Christoffels A."/>
            <person name="Clutterbuck D.R."/>
            <person name="Crowe M.L."/>
            <person name="Dalla E."/>
            <person name="Dalrymple B.P."/>
            <person name="de Bono B."/>
            <person name="Della Gatta G."/>
            <person name="di Bernardo D."/>
            <person name="Down T."/>
            <person name="Engstrom P."/>
            <person name="Fagiolini M."/>
            <person name="Faulkner G."/>
            <person name="Fletcher C.F."/>
            <person name="Fukushima T."/>
            <person name="Furuno M."/>
            <person name="Futaki S."/>
            <person name="Gariboldi M."/>
            <person name="Georgii-Hemming P."/>
            <person name="Gingeras T.R."/>
            <person name="Gojobori T."/>
            <person name="Green R.E."/>
            <person name="Gustincich S."/>
            <person name="Harbers M."/>
            <person name="Hayashi Y."/>
            <person name="Hensch T.K."/>
            <person name="Hirokawa N."/>
            <person name="Hill D."/>
            <person name="Huminiecki L."/>
            <person name="Iacono M."/>
            <person name="Ikeo K."/>
            <person name="Iwama A."/>
            <person name="Ishikawa T."/>
            <person name="Jakt M."/>
            <person name="Kanapin A."/>
            <person name="Katoh M."/>
            <person name="Kawasawa Y."/>
            <person name="Kelso J."/>
            <person name="Kitamura H."/>
            <person name="Kitano H."/>
            <person name="Kollias G."/>
            <person name="Krishnan S.P."/>
            <person name="Kruger A."/>
            <person name="Kummerfeld S.K."/>
            <person name="Kurochkin I.V."/>
            <person name="Lareau L.F."/>
            <person name="Lazarevic D."/>
            <person name="Lipovich L."/>
            <person name="Liu J."/>
            <person name="Liuni S."/>
            <person name="McWilliam S."/>
            <person name="Madan Babu M."/>
            <person name="Madera M."/>
            <person name="Marchionni L."/>
            <person name="Matsuda H."/>
            <person name="Matsuzawa S."/>
            <person name="Miki H."/>
            <person name="Mignone F."/>
            <person name="Miyake S."/>
            <person name="Morris K."/>
            <person name="Mottagui-Tabar S."/>
            <person name="Mulder N."/>
            <person name="Nakano N."/>
            <person name="Nakauchi H."/>
            <person name="Ng P."/>
            <person name="Nilsson R."/>
            <person name="Nishiguchi S."/>
            <person name="Nishikawa S."/>
            <person name="Nori F."/>
            <person name="Ohara O."/>
            <person name="Okazaki Y."/>
            <person name="Orlando V."/>
            <person name="Pang K.C."/>
            <person name="Pavan W.J."/>
            <person name="Pavesi G."/>
            <person name="Pesole G."/>
            <person name="Petrovsky N."/>
            <person name="Piazza S."/>
            <person name="Reed J."/>
            <person name="Reid J.F."/>
            <person name="Ring B.Z."/>
            <person name="Ringwald M."/>
            <person name="Rost B."/>
            <person name="Ruan Y."/>
            <person name="Salzberg S.L."/>
            <person name="Sandelin A."/>
            <person name="Schneider C."/>
            <person name="Schoenbach C."/>
            <person name="Sekiguchi K."/>
            <person name="Semple C.A."/>
            <person name="Seno S."/>
            <person name="Sessa L."/>
            <person name="Sheng Y."/>
            <person name="Shibata Y."/>
            <person name="Shimada H."/>
            <person name="Shimada K."/>
            <person name="Silva D."/>
            <person name="Sinclair B."/>
            <person name="Sperling S."/>
            <person name="Stupka E."/>
            <person name="Sugiura K."/>
            <person name="Sultana R."/>
            <person name="Takenaka Y."/>
            <person name="Taki K."/>
            <person name="Tammoja K."/>
            <person name="Tan S.L."/>
            <person name="Tang S."/>
            <person name="Taylor M.S."/>
            <person name="Tegner J."/>
            <person name="Teichmann S.A."/>
            <person name="Ueda H.R."/>
            <person name="van Nimwegen E."/>
            <person name="Verardo R."/>
            <person name="Wei C.L."/>
            <person name="Yagi K."/>
            <person name="Yamanishi H."/>
            <person name="Zabarovsky E."/>
            <person name="Zhu S."/>
            <person name="Zimmer A."/>
            <person name="Hide W."/>
            <person name="Bult C."/>
            <person name="Grimmond S.M."/>
            <person name="Teasdale R.D."/>
            <person name="Liu E.T."/>
            <person name="Brusic V."/>
            <person name="Quackenbush J."/>
            <person name="Wahlestedt C."/>
            <person name="Mattick J.S."/>
            <person name="Hume D.A."/>
            <person name="Kai C."/>
            <person name="Sasaki D."/>
            <person name="Tomaru Y."/>
            <person name="Fukuda S."/>
            <person name="Kanamori-Katayama M."/>
            <person name="Suzuki M."/>
            <person name="Aoki J."/>
            <person name="Arakawa T."/>
            <person name="Iida J."/>
            <person name="Imamura K."/>
            <person name="Itoh M."/>
            <person name="Kato T."/>
            <person name="Kawaji H."/>
            <person name="Kawagashira N."/>
            <person name="Kawashima T."/>
            <person name="Kojima M."/>
            <person name="Kondo S."/>
            <person name="Konno H."/>
            <person name="Nakano K."/>
            <person name="Ninomiya N."/>
            <person name="Nishio T."/>
            <person name="Okada M."/>
            <person name="Plessy C."/>
            <person name="Shibata K."/>
            <person name="Shiraki T."/>
            <person name="Suzuki S."/>
            <person name="Tagami M."/>
            <person name="Waki K."/>
            <person name="Watahiki A."/>
            <person name="Okamura-Oho Y."/>
            <person name="Suzuki H."/>
            <person name="Kawai J."/>
            <person name="Hayashizaki Y."/>
        </authorList>
    </citation>
    <scope>NUCLEOTIDE SEQUENCE [LARGE SCALE MRNA]</scope>
    <source>
        <strain>C57BL/6J</strain>
        <tissue>Muellerian duct</tissue>
    </source>
</reference>
<reference key="2">
    <citation type="journal article" date="2004" name="Genome Res.">
        <title>The status, quality, and expansion of the NIH full-length cDNA project: the Mammalian Gene Collection (MGC).</title>
        <authorList>
            <consortium name="The MGC Project Team"/>
        </authorList>
    </citation>
    <scope>NUCLEOTIDE SEQUENCE [LARGE SCALE MRNA]</scope>
    <source>
        <strain>FVB/N</strain>
        <tissue>Mammary tumor</tissue>
    </source>
</reference>
<reference key="3">
    <citation type="journal article" date="2010" name="Cell">
        <title>A tissue-specific atlas of mouse protein phosphorylation and expression.</title>
        <authorList>
            <person name="Huttlin E.L."/>
            <person name="Jedrychowski M.P."/>
            <person name="Elias J.E."/>
            <person name="Goswami T."/>
            <person name="Rad R."/>
            <person name="Beausoleil S.A."/>
            <person name="Villen J."/>
            <person name="Haas W."/>
            <person name="Sowa M.E."/>
            <person name="Gygi S.P."/>
        </authorList>
    </citation>
    <scope>IDENTIFICATION BY MASS SPECTROMETRY [LARGE SCALE ANALYSIS]</scope>
    <source>
        <tissue>Brain</tissue>
        <tissue>Brown adipose tissue</tissue>
        <tissue>Heart</tissue>
        <tissue>Kidney</tissue>
        <tissue>Liver</tissue>
        <tissue>Pancreas</tissue>
        <tissue>Testis</tissue>
    </source>
</reference>
<gene>
    <name evidence="4" type="primary">Mix23</name>
    <name evidence="4" type="synonym">Ccdc58</name>
</gene>
<accession>Q8R3Q6</accession>
<accession>Q3UXM5</accession>
<sequence>MAAPSGSVNCEEFAEFQELLKVMRTIDDRIVHELNTTVPTASFAGKIDASQTCKQLYESLMAAHVSRDRVIKNCIAQTSAVVKSLREEREKNLDDLTLLKRLRKEQTKLKWMQSELNVEEVVNDRSWKVFNERCRVHFKPPKNE</sequence>
<comment type="similarity">
    <text evidence="3">Belongs to the MIX23 family.</text>
</comment>
<dbReference type="EMBL" id="AK135450">
    <property type="protein sequence ID" value="BAE22538.1"/>
    <property type="molecule type" value="mRNA"/>
</dbReference>
<dbReference type="EMBL" id="BC024862">
    <property type="protein sequence ID" value="AAH24862.1"/>
    <property type="molecule type" value="mRNA"/>
</dbReference>
<dbReference type="CCDS" id="CCDS28147.1"/>
<dbReference type="RefSeq" id="NP_001152893.1">
    <property type="nucleotide sequence ID" value="NM_001159421.1"/>
</dbReference>
<dbReference type="RefSeq" id="NP_001152894.1">
    <property type="nucleotide sequence ID" value="NM_001159422.1"/>
</dbReference>
<dbReference type="RefSeq" id="NP_941047.1">
    <property type="nucleotide sequence ID" value="NM_198645.2"/>
</dbReference>
<dbReference type="SMR" id="Q8R3Q6"/>
<dbReference type="BioGRID" id="237755">
    <property type="interactions" value="1"/>
</dbReference>
<dbReference type="FunCoup" id="Q8R3Q6">
    <property type="interactions" value="1897"/>
</dbReference>
<dbReference type="STRING" id="10090.ENSMUSP00000125874"/>
<dbReference type="iPTMnet" id="Q8R3Q6"/>
<dbReference type="PhosphoSitePlus" id="Q8R3Q6"/>
<dbReference type="jPOST" id="Q8R3Q6"/>
<dbReference type="PaxDb" id="10090-ENSMUSP00000125874"/>
<dbReference type="ProteomicsDB" id="283732"/>
<dbReference type="Pumba" id="Q8R3Q6"/>
<dbReference type="Antibodypedia" id="58352">
    <property type="antibodies" value="41 antibodies from 7 providers"/>
</dbReference>
<dbReference type="Ensembl" id="ENSMUST00000164916.9">
    <property type="protein sequence ID" value="ENSMUSP00000125874.2"/>
    <property type="gene ID" value="ENSMUSG00000075229.12"/>
</dbReference>
<dbReference type="GeneID" id="381045"/>
<dbReference type="KEGG" id="mmu:381045"/>
<dbReference type="UCSC" id="uc007zce.2">
    <property type="organism name" value="mouse"/>
</dbReference>
<dbReference type="AGR" id="MGI:2146423"/>
<dbReference type="CTD" id="131076"/>
<dbReference type="MGI" id="MGI:2146423">
    <property type="gene designation" value="Mix23"/>
</dbReference>
<dbReference type="VEuPathDB" id="HostDB:ENSMUSG00000075229"/>
<dbReference type="eggNOG" id="KOG4613">
    <property type="taxonomic scope" value="Eukaryota"/>
</dbReference>
<dbReference type="GeneTree" id="ENSGT00390000011053"/>
<dbReference type="HOGENOM" id="CLU_123941_0_0_1"/>
<dbReference type="InParanoid" id="Q8R3Q6"/>
<dbReference type="OMA" id="CRYFEPP"/>
<dbReference type="OrthoDB" id="5593818at2759"/>
<dbReference type="PhylomeDB" id="Q8R3Q6"/>
<dbReference type="TreeFam" id="TF324875"/>
<dbReference type="BioGRID-ORCS" id="381045">
    <property type="hits" value="2 hits in 78 CRISPR screens"/>
</dbReference>
<dbReference type="ChiTaRS" id="Ccdc58">
    <property type="organism name" value="mouse"/>
</dbReference>
<dbReference type="PRO" id="PR:Q8R3Q6"/>
<dbReference type="Proteomes" id="UP000000589">
    <property type="component" value="Chromosome 16"/>
</dbReference>
<dbReference type="RNAct" id="Q8R3Q6">
    <property type="molecule type" value="protein"/>
</dbReference>
<dbReference type="Bgee" id="ENSMUSG00000075229">
    <property type="expression patterns" value="Expressed in epiblast cell in embryo and 261 other cell types or tissues"/>
</dbReference>
<dbReference type="ExpressionAtlas" id="Q8R3Q6">
    <property type="expression patterns" value="baseline and differential"/>
</dbReference>
<dbReference type="GO" id="GO:0005758">
    <property type="term" value="C:mitochondrial intermembrane space"/>
    <property type="evidence" value="ECO:0007669"/>
    <property type="project" value="InterPro"/>
</dbReference>
<dbReference type="GO" id="GO:0005739">
    <property type="term" value="C:mitochondrion"/>
    <property type="evidence" value="ECO:0007005"/>
    <property type="project" value="MGI"/>
</dbReference>
<dbReference type="InterPro" id="IPR019171">
    <property type="entry name" value="MIX23"/>
</dbReference>
<dbReference type="PANTHER" id="PTHR31905">
    <property type="entry name" value="COILED-COIL DOMAIN-CONTAINING PROTEIN 58"/>
    <property type="match status" value="1"/>
</dbReference>
<dbReference type="PANTHER" id="PTHR31905:SF2">
    <property type="entry name" value="PROTEIN MIX23"/>
    <property type="match status" value="1"/>
</dbReference>
<dbReference type="Pfam" id="PF09774">
    <property type="entry name" value="MIX23"/>
    <property type="match status" value="1"/>
</dbReference>
<proteinExistence type="evidence at protein level"/>
<protein>
    <recommendedName>
        <fullName evidence="3">Protein MIX23</fullName>
    </recommendedName>
    <alternativeName>
        <fullName>Coiled-coil domain-containing protein 58</fullName>
    </alternativeName>
</protein>
<organism>
    <name type="scientific">Mus musculus</name>
    <name type="common">Mouse</name>
    <dbReference type="NCBI Taxonomy" id="10090"/>
    <lineage>
        <taxon>Eukaryota</taxon>
        <taxon>Metazoa</taxon>
        <taxon>Chordata</taxon>
        <taxon>Craniata</taxon>
        <taxon>Vertebrata</taxon>
        <taxon>Euteleostomi</taxon>
        <taxon>Mammalia</taxon>
        <taxon>Eutheria</taxon>
        <taxon>Euarchontoglires</taxon>
        <taxon>Glires</taxon>
        <taxon>Rodentia</taxon>
        <taxon>Myomorpha</taxon>
        <taxon>Muroidea</taxon>
        <taxon>Muridae</taxon>
        <taxon>Murinae</taxon>
        <taxon>Mus</taxon>
        <taxon>Mus</taxon>
    </lineage>
</organism>
<evidence type="ECO:0000250" key="1">
    <source>
        <dbReference type="UniProtKB" id="Q4VC31"/>
    </source>
</evidence>
<evidence type="ECO:0000255" key="2"/>
<evidence type="ECO:0000305" key="3"/>
<evidence type="ECO:0000312" key="4">
    <source>
        <dbReference type="MGI" id="MGI:2146423"/>
    </source>
</evidence>
<name>MIX23_MOUSE</name>
<keyword id="KW-0007">Acetylation</keyword>
<keyword id="KW-0175">Coiled coil</keyword>
<keyword id="KW-1185">Reference proteome</keyword>